<accession>Q646A0</accession>
<keyword id="KW-0297">G-protein coupled receptor</keyword>
<keyword id="KW-0325">Glycoprotein</keyword>
<keyword id="KW-0472">Membrane</keyword>
<keyword id="KW-0675">Receptor</keyword>
<keyword id="KW-1185">Reference proteome</keyword>
<keyword id="KW-0716">Sensory transduction</keyword>
<keyword id="KW-0919">Taste</keyword>
<keyword id="KW-0807">Transducer</keyword>
<keyword id="KW-0812">Transmembrane</keyword>
<keyword id="KW-1133">Transmembrane helix</keyword>
<dbReference type="EMBL" id="AY724908">
    <property type="protein sequence ID" value="AAU21119.1"/>
    <property type="molecule type" value="Genomic_DNA"/>
</dbReference>
<dbReference type="SMR" id="Q646A0"/>
<dbReference type="FunCoup" id="Q646A0">
    <property type="interactions" value="197"/>
</dbReference>
<dbReference type="GlyCosmos" id="Q646A0">
    <property type="glycosylation" value="2 sites, No reported glycans"/>
</dbReference>
<dbReference type="eggNOG" id="ENOG502TE6U">
    <property type="taxonomic scope" value="Eukaryota"/>
</dbReference>
<dbReference type="InParanoid" id="Q646A0"/>
<dbReference type="Proteomes" id="UP000001519">
    <property type="component" value="Unplaced"/>
</dbReference>
<dbReference type="GO" id="GO:0016020">
    <property type="term" value="C:membrane"/>
    <property type="evidence" value="ECO:0000318"/>
    <property type="project" value="GO_Central"/>
</dbReference>
<dbReference type="GO" id="GO:0005886">
    <property type="term" value="C:plasma membrane"/>
    <property type="evidence" value="ECO:0007669"/>
    <property type="project" value="UniProtKB-ARBA"/>
</dbReference>
<dbReference type="GO" id="GO:0033038">
    <property type="term" value="F:bitter taste receptor activity"/>
    <property type="evidence" value="ECO:0007669"/>
    <property type="project" value="InterPro"/>
</dbReference>
<dbReference type="GO" id="GO:0004930">
    <property type="term" value="F:G protein-coupled receptor activity"/>
    <property type="evidence" value="ECO:0007669"/>
    <property type="project" value="UniProtKB-KW"/>
</dbReference>
<dbReference type="CDD" id="cd15027">
    <property type="entry name" value="7tm_TAS2R43-like"/>
    <property type="match status" value="1"/>
</dbReference>
<dbReference type="FunFam" id="1.20.1070.10:FF:000042">
    <property type="entry name" value="Taste receptor type 2 member 7"/>
    <property type="match status" value="1"/>
</dbReference>
<dbReference type="Gene3D" id="1.20.1070.10">
    <property type="entry name" value="Rhodopsin 7-helix transmembrane proteins"/>
    <property type="match status" value="1"/>
</dbReference>
<dbReference type="InterPro" id="IPR007960">
    <property type="entry name" value="TAS2R"/>
</dbReference>
<dbReference type="PANTHER" id="PTHR11394">
    <property type="entry name" value="TASTE RECEPTOR TYPE 2"/>
    <property type="match status" value="1"/>
</dbReference>
<dbReference type="PANTHER" id="PTHR11394:SF27">
    <property type="entry name" value="TASTE RECEPTOR TYPE 2 MEMBER 20"/>
    <property type="match status" value="1"/>
</dbReference>
<dbReference type="Pfam" id="PF05296">
    <property type="entry name" value="TAS2R"/>
    <property type="match status" value="1"/>
</dbReference>
<dbReference type="SUPFAM" id="SSF81321">
    <property type="entry name" value="Family A G protein-coupled receptor-like"/>
    <property type="match status" value="1"/>
</dbReference>
<organism>
    <name type="scientific">Gorilla gorilla gorilla</name>
    <name type="common">Western lowland gorilla</name>
    <dbReference type="NCBI Taxonomy" id="9595"/>
    <lineage>
        <taxon>Eukaryota</taxon>
        <taxon>Metazoa</taxon>
        <taxon>Chordata</taxon>
        <taxon>Craniata</taxon>
        <taxon>Vertebrata</taxon>
        <taxon>Euteleostomi</taxon>
        <taxon>Mammalia</taxon>
        <taxon>Eutheria</taxon>
        <taxon>Euarchontoglires</taxon>
        <taxon>Primates</taxon>
        <taxon>Haplorrhini</taxon>
        <taxon>Catarrhini</taxon>
        <taxon>Hominidae</taxon>
        <taxon>Gorilla</taxon>
    </lineage>
</organism>
<feature type="chain" id="PRO_0000082330" description="Taste receptor type 2 member 20">
    <location>
        <begin position="1"/>
        <end position="309"/>
    </location>
</feature>
<feature type="topological domain" description="Extracellular" evidence="2">
    <location>
        <begin position="1"/>
        <end position="6"/>
    </location>
</feature>
<feature type="transmembrane region" description="Helical; Name=1" evidence="2">
    <location>
        <begin position="7"/>
        <end position="27"/>
    </location>
</feature>
<feature type="topological domain" description="Cytoplasmic" evidence="2">
    <location>
        <begin position="28"/>
        <end position="46"/>
    </location>
</feature>
<feature type="transmembrane region" description="Helical; Name=2" evidence="2">
    <location>
        <begin position="47"/>
        <end position="67"/>
    </location>
</feature>
<feature type="topological domain" description="Extracellular" evidence="2">
    <location>
        <begin position="68"/>
        <end position="79"/>
    </location>
</feature>
<feature type="transmembrane region" description="Helical; Name=3" evidence="2">
    <location>
        <begin position="80"/>
        <end position="100"/>
    </location>
</feature>
<feature type="topological domain" description="Cytoplasmic" evidence="2">
    <location>
        <begin position="101"/>
        <end position="125"/>
    </location>
</feature>
<feature type="transmembrane region" description="Helical; Name=4" evidence="2">
    <location>
        <begin position="126"/>
        <end position="146"/>
    </location>
</feature>
<feature type="topological domain" description="Extracellular" evidence="2">
    <location>
        <begin position="147"/>
        <end position="178"/>
    </location>
</feature>
<feature type="transmembrane region" description="Helical; Name=5" evidence="2">
    <location>
        <begin position="179"/>
        <end position="199"/>
    </location>
</feature>
<feature type="topological domain" description="Cytoplasmic" evidence="2">
    <location>
        <begin position="200"/>
        <end position="229"/>
    </location>
</feature>
<feature type="transmembrane region" description="Helical; Name=6" evidence="2">
    <location>
        <begin position="230"/>
        <end position="250"/>
    </location>
</feature>
<feature type="topological domain" description="Extracellular" evidence="2">
    <location>
        <begin position="251"/>
        <end position="259"/>
    </location>
</feature>
<feature type="transmembrane region" description="Helical; Name=7" evidence="2">
    <location>
        <begin position="260"/>
        <end position="280"/>
    </location>
</feature>
<feature type="topological domain" description="Cytoplasmic" evidence="2">
    <location>
        <begin position="281"/>
        <end position="309"/>
    </location>
</feature>
<feature type="glycosylation site" description="N-linked (GlcNAc...) asparagine" evidence="2">
    <location>
        <position position="161"/>
    </location>
</feature>
<feature type="glycosylation site" description="N-linked (GlcNAc...) asparagine" evidence="2">
    <location>
        <position position="176"/>
    </location>
</feature>
<protein>
    <recommendedName>
        <fullName>Taste receptor type 2 member 20</fullName>
    </recommendedName>
    <alternativeName>
        <fullName>Taste receptor type 2 member 49</fullName>
        <shortName>T2R49</shortName>
    </alternativeName>
</protein>
<evidence type="ECO:0000250" key="1"/>
<evidence type="ECO:0000255" key="2"/>
<evidence type="ECO:0000305" key="3"/>
<sequence>MMSFLHIVFSILVVVAFILGNFANGFIALINFIAWVKRQKISSADQIIAALAVSRVGLLWVILLHWYSTVLNPTSSNLKVTIFISNAWAVTNHFSIWLAASLSIFYLLKIVNFSRLIFHHLKRKAKSVVLVIVLGSLFFLVCHLVMKSTYINVWTEEYEGNVTWKIKLRNAMHLSNLTVAMLANLIPFTLTLISFLLLIYSLCKHLKKMQLHGKGSQDPSTKIHIKALQTVTSFLILLAIYFLCLITSFWNSKMRPKEIVLMLCQAFGIIYPSFHSFILIWGNKTLKQTFLSVLWRVTCWAKGQNQSTP</sequence>
<gene>
    <name type="primary">TAS2R20</name>
    <name type="synonym">TAS2R49</name>
</gene>
<name>T2R20_GORGO</name>
<comment type="function">
    <text evidence="1">Receptor that may play a role in the perception of bitterness and is gustducin-linked. May play a role in sensing the chemical composition of the gastrointestinal content. The activity of this receptor may stimulate alpha gustducin, mediate PLC-beta-2 activation and lead to the gating of TRPM5 (By similarity).</text>
</comment>
<comment type="subcellular location">
    <subcellularLocation>
        <location>Membrane</location>
        <topology>Multi-pass membrane protein</topology>
    </subcellularLocation>
</comment>
<comment type="miscellaneous">
    <text>Most taste cells may be activated by a limited number of bitter compounds; individual taste cells can discriminate among bitter stimuli.</text>
</comment>
<comment type="similarity">
    <text evidence="3">Belongs to the G-protein coupled receptor T2R family.</text>
</comment>
<reference key="1">
    <citation type="journal article" date="2005" name="Mol. Biol. Evol.">
        <title>Evolution of bitter taste receptors in humans and apes.</title>
        <authorList>
            <person name="Fischer A."/>
            <person name="Gilad Y."/>
            <person name="Man O."/>
            <person name="Paeaebo S."/>
        </authorList>
    </citation>
    <scope>NUCLEOTIDE SEQUENCE [GENOMIC DNA]</scope>
</reference>
<proteinExistence type="inferred from homology"/>